<feature type="signal peptide" evidence="7">
    <location>
        <begin position="1"/>
        <end position="35"/>
    </location>
</feature>
<feature type="chain" id="PRO_0000387518" description="LRR receptor-like serine/threonine-protein kinase RGI2">
    <location>
        <begin position="36"/>
        <end position="1135"/>
    </location>
</feature>
<feature type="topological domain" description="Extracellular" evidence="7">
    <location>
        <begin position="36"/>
        <end position="723"/>
    </location>
</feature>
<feature type="transmembrane region" description="Helical" evidence="7">
    <location>
        <begin position="724"/>
        <end position="744"/>
    </location>
</feature>
<feature type="topological domain" description="Cytoplasmic" evidence="7">
    <location>
        <begin position="745"/>
        <end position="1135"/>
    </location>
</feature>
<feature type="repeat" description="LRR 1" evidence="7">
    <location>
        <begin position="105"/>
        <end position="129"/>
    </location>
</feature>
<feature type="repeat" description="LRR 2" evidence="7">
    <location>
        <begin position="130"/>
        <end position="153"/>
    </location>
</feature>
<feature type="repeat" description="LRR 3" evidence="7">
    <location>
        <begin position="154"/>
        <end position="177"/>
    </location>
</feature>
<feature type="repeat" description="LRR 4" evidence="7">
    <location>
        <begin position="179"/>
        <end position="203"/>
    </location>
</feature>
<feature type="repeat" description="LRR 5" evidence="7">
    <location>
        <begin position="226"/>
        <end position="250"/>
    </location>
</feature>
<feature type="repeat" description="LRR 6" evidence="7">
    <location>
        <begin position="251"/>
        <end position="274"/>
    </location>
</feature>
<feature type="repeat" description="LRR 7" evidence="7">
    <location>
        <begin position="276"/>
        <end position="298"/>
    </location>
</feature>
<feature type="repeat" description="LRR 8" evidence="7">
    <location>
        <begin position="299"/>
        <end position="323"/>
    </location>
</feature>
<feature type="repeat" description="LRR 9" evidence="7">
    <location>
        <begin position="325"/>
        <end position="345"/>
    </location>
</feature>
<feature type="repeat" description="LRR 10" evidence="7">
    <location>
        <begin position="346"/>
        <end position="370"/>
    </location>
</feature>
<feature type="repeat" description="LRR 11" evidence="7">
    <location>
        <begin position="372"/>
        <end position="395"/>
    </location>
</feature>
<feature type="repeat" description="LRR 12" evidence="7">
    <location>
        <begin position="397"/>
        <end position="418"/>
    </location>
</feature>
<feature type="repeat" description="LRR 13" evidence="7">
    <location>
        <begin position="419"/>
        <end position="442"/>
    </location>
</feature>
<feature type="repeat" description="LRR 14" evidence="7">
    <location>
        <begin position="444"/>
        <end position="466"/>
    </location>
</feature>
<feature type="repeat" description="LRR 15" evidence="7">
    <location>
        <begin position="467"/>
        <end position="490"/>
    </location>
</feature>
<feature type="repeat" description="LRR 16" evidence="7">
    <location>
        <begin position="491"/>
        <end position="514"/>
    </location>
</feature>
<feature type="repeat" description="LRR 17" evidence="7">
    <location>
        <begin position="516"/>
        <end position="538"/>
    </location>
</feature>
<feature type="repeat" description="LRR 18" evidence="7">
    <location>
        <begin position="539"/>
        <end position="562"/>
    </location>
</feature>
<feature type="repeat" description="LRR 19" evidence="7">
    <location>
        <begin position="564"/>
        <end position="586"/>
    </location>
</feature>
<feature type="repeat" description="LRR 20" evidence="7">
    <location>
        <begin position="587"/>
        <end position="610"/>
    </location>
</feature>
<feature type="repeat" description="LRR 21" evidence="7">
    <location>
        <begin position="612"/>
        <end position="634"/>
    </location>
</feature>
<feature type="repeat" description="LRR 22" evidence="7">
    <location>
        <begin position="635"/>
        <end position="658"/>
    </location>
</feature>
<feature type="repeat" description="LRR 23" evidence="7">
    <location>
        <begin position="659"/>
        <end position="683"/>
    </location>
</feature>
<feature type="domain" description="Protein kinase" evidence="8">
    <location>
        <begin position="785"/>
        <end position="1066"/>
    </location>
</feature>
<feature type="region of interest" description="Disordered" evidence="11">
    <location>
        <begin position="1077"/>
        <end position="1135"/>
    </location>
</feature>
<feature type="short sequence motif" description="Small peptide recognition" evidence="1">
    <location>
        <begin position="186"/>
        <end position="187"/>
    </location>
</feature>
<feature type="short sequence motif" description="Small peptide recognition" evidence="1">
    <location>
        <begin position="208"/>
        <end position="211"/>
    </location>
</feature>
<feature type="short sequence motif" description="Small peptide recognition" evidence="1">
    <location>
        <begin position="231"/>
        <end position="236"/>
    </location>
</feature>
<feature type="short sequence motif" description="Small peptide recognition" evidence="1">
    <location>
        <position position="259"/>
    </location>
</feature>
<feature type="short sequence motif" description="Small peptide recognition" evidence="1">
    <location>
        <begin position="281"/>
        <end position="283"/>
    </location>
</feature>
<feature type="short sequence motif" description="Small peptide recognition" evidence="1">
    <location>
        <begin position="329"/>
        <end position="332"/>
    </location>
</feature>
<feature type="short sequence motif" description="Small peptide recognition" evidence="1">
    <location>
        <begin position="351"/>
        <end position="353"/>
    </location>
</feature>
<feature type="short sequence motif" description="Small peptide recognition" evidence="1">
    <location>
        <begin position="399"/>
        <end position="403"/>
    </location>
</feature>
<feature type="short sequence motif" description="Small peptide recognition" evidence="1">
    <location>
        <begin position="425"/>
        <end position="428"/>
    </location>
</feature>
<feature type="short sequence motif" description="Small peptide recognition" evidence="1">
    <location>
        <begin position="447"/>
        <end position="451"/>
    </location>
</feature>
<feature type="short sequence motif" description="Small peptide recognition" evidence="1">
    <location>
        <begin position="471"/>
        <end position="473"/>
    </location>
</feature>
<feature type="compositionally biased region" description="Low complexity" evidence="11">
    <location>
        <begin position="1108"/>
        <end position="1128"/>
    </location>
</feature>
<feature type="active site" description="Proton acceptor" evidence="8 10">
    <location>
        <position position="920"/>
    </location>
</feature>
<feature type="binding site" evidence="8">
    <location>
        <begin position="791"/>
        <end position="799"/>
    </location>
    <ligand>
        <name>ATP</name>
        <dbReference type="ChEBI" id="CHEBI:30616"/>
    </ligand>
</feature>
<feature type="binding site" evidence="8">
    <location>
        <position position="813"/>
    </location>
    <ligand>
        <name>ATP</name>
        <dbReference type="ChEBI" id="CHEBI:30616"/>
    </ligand>
</feature>
<feature type="site" description="Essential for autophosphorylation activity" evidence="5">
    <location>
        <position position="813"/>
    </location>
</feature>
<feature type="modified residue" description="Phosphothreonine" evidence="3">
    <location>
        <position position="777"/>
    </location>
</feature>
<feature type="modified residue" description="Phosphotyrosine" evidence="3">
    <location>
        <position position="868"/>
    </location>
</feature>
<feature type="modified residue" description="Phosphotyrosine" evidence="2">
    <location>
        <position position="907"/>
    </location>
</feature>
<feature type="modified residue" description="Phosphotyrosine" evidence="2">
    <location>
        <position position="963"/>
    </location>
</feature>
<feature type="modified residue" description="Phosphotyrosine" evidence="6">
    <location>
        <position position="970"/>
    </location>
</feature>
<feature type="glycosylation site" description="N-linked (GlcNAc...) asparagine" evidence="9">
    <location>
        <position position="101"/>
    </location>
</feature>
<feature type="glycosylation site" description="N-linked (GlcNAc...) asparagine" evidence="9">
    <location>
        <position position="117"/>
    </location>
</feature>
<feature type="glycosylation site" description="N-linked (GlcNAc...) asparagine" evidence="9">
    <location>
        <position position="273"/>
    </location>
</feature>
<feature type="glycosylation site" description="N-linked (GlcNAc...) asparagine" evidence="9">
    <location>
        <position position="345"/>
    </location>
</feature>
<feature type="glycosylation site" description="N-linked (GlcNAc...) asparagine" evidence="9">
    <location>
        <position position="358"/>
    </location>
</feature>
<feature type="glycosylation site" description="N-linked (GlcNAc...) asparagine" evidence="9">
    <location>
        <position position="369"/>
    </location>
</feature>
<feature type="glycosylation site" description="N-linked (GlcNAc...) asparagine" evidence="9">
    <location>
        <position position="444"/>
    </location>
</feature>
<feature type="glycosylation site" description="N-linked (GlcNAc...) asparagine" evidence="9">
    <location>
        <position position="465"/>
    </location>
</feature>
<feature type="glycosylation site" description="N-linked (GlcNAc...) asparagine" evidence="9">
    <location>
        <position position="492"/>
    </location>
</feature>
<feature type="glycosylation site" description="N-linked (GlcNAc...) asparagine" evidence="9">
    <location>
        <position position="502"/>
    </location>
</feature>
<feature type="glycosylation site" description="N-linked (GlcNAc...) asparagine" evidence="9">
    <location>
        <position position="521"/>
    </location>
</feature>
<feature type="glycosylation site" description="N-linked (GlcNAc...) asparagine" evidence="9">
    <location>
        <position position="524"/>
    </location>
</feature>
<feature type="glycosylation site" description="N-linked (GlcNAc...) asparagine" evidence="9">
    <location>
        <position position="598"/>
    </location>
</feature>
<feature type="glycosylation site" description="N-linked (GlcNAc...) asparagine" evidence="9">
    <location>
        <position position="618"/>
    </location>
</feature>
<feature type="glycosylation site" description="N-linked (GlcNAc...) asparagine" evidence="9">
    <location>
        <position position="665"/>
    </location>
</feature>
<feature type="glycosylation site" description="N-linked (GlcNAc...) asparagine" evidence="9">
    <location>
        <position position="707"/>
    </location>
</feature>
<feature type="disulfide bond" evidence="4">
    <location>
        <begin position="69"/>
        <end position="76"/>
    </location>
</feature>
<feature type="sequence conflict" description="In Ref. 1; CAD79349." evidence="23" ref="1">
    <original>S</original>
    <variation>P</variation>
    <location>
        <position position="79"/>
    </location>
</feature>
<feature type="sequence conflict" description="In Ref. 1; CAD79349." evidence="23" ref="1">
    <original>S</original>
    <variation>F</variation>
    <location>
        <position position="257"/>
    </location>
</feature>
<feature type="sequence conflict" description="In Ref. 1; CAD79349." evidence="23" ref="1">
    <original>N</original>
    <variation>D</variation>
    <location>
        <position position="369"/>
    </location>
</feature>
<feature type="sequence conflict" description="In Ref. 1; CAD79349." evidence="23" ref="1">
    <original>I</original>
    <variation>T</variation>
    <location>
        <position position="463"/>
    </location>
</feature>
<gene>
    <name evidence="21" type="primary">RGI2</name>
    <name evidence="18" type="synonym">RCH1</name>
    <name evidence="19 22" type="synonym">RGFR2</name>
    <name evidence="20" type="synonym">RGFR3</name>
    <name evidence="24" type="ordered locus">At5g48940</name>
    <name evidence="25" type="ORF">K19E20.5</name>
</gene>
<proteinExistence type="evidence at protein level"/>
<evidence type="ECO:0000250" key="1">
    <source>
        <dbReference type="UniProtKB" id="C0LGR3"/>
    </source>
</evidence>
<evidence type="ECO:0000250" key="2">
    <source>
        <dbReference type="UniProtKB" id="C0LGT6"/>
    </source>
</evidence>
<evidence type="ECO:0000250" key="3">
    <source>
        <dbReference type="UniProtKB" id="O22476"/>
    </source>
</evidence>
<evidence type="ECO:0000250" key="4">
    <source>
        <dbReference type="UniProtKB" id="Q94AG2"/>
    </source>
</evidence>
<evidence type="ECO:0000250" key="5">
    <source>
        <dbReference type="UniProtKB" id="Q9LHP4"/>
    </source>
</evidence>
<evidence type="ECO:0000250" key="6">
    <source>
        <dbReference type="UniProtKB" id="Q9M0G7"/>
    </source>
</evidence>
<evidence type="ECO:0000255" key="7"/>
<evidence type="ECO:0000255" key="8">
    <source>
        <dbReference type="PROSITE-ProRule" id="PRU00159"/>
    </source>
</evidence>
<evidence type="ECO:0000255" key="9">
    <source>
        <dbReference type="PROSITE-ProRule" id="PRU00498"/>
    </source>
</evidence>
<evidence type="ECO:0000255" key="10">
    <source>
        <dbReference type="PROSITE-ProRule" id="PRU10027"/>
    </source>
</evidence>
<evidence type="ECO:0000256" key="11">
    <source>
        <dbReference type="SAM" id="MobiDB-lite"/>
    </source>
</evidence>
<evidence type="ECO:0000269" key="12">
    <source>
    </source>
</evidence>
<evidence type="ECO:0000269" key="13">
    <source>
    </source>
</evidence>
<evidence type="ECO:0000269" key="14">
    <source>
    </source>
</evidence>
<evidence type="ECO:0000269" key="15">
    <source>
    </source>
</evidence>
<evidence type="ECO:0000269" key="16">
    <source>
    </source>
</evidence>
<evidence type="ECO:0000269" key="17">
    <source>
    </source>
</evidence>
<evidence type="ECO:0000303" key="18">
    <source>
    </source>
</evidence>
<evidence type="ECO:0000303" key="19">
    <source>
    </source>
</evidence>
<evidence type="ECO:0000303" key="20">
    <source>
    </source>
</evidence>
<evidence type="ECO:0000303" key="21">
    <source>
    </source>
</evidence>
<evidence type="ECO:0000303" key="22">
    <source>
    </source>
</evidence>
<evidence type="ECO:0000305" key="23"/>
<evidence type="ECO:0000312" key="24">
    <source>
        <dbReference type="Araport" id="AT5G48940"/>
    </source>
</evidence>
<evidence type="ECO:0000312" key="25">
    <source>
        <dbReference type="EMBL" id="BAB10317.1"/>
    </source>
</evidence>
<comment type="function">
    <text evidence="14 15 16">Together with RGI1, RGI3, RGI4 and RGI5, acts as a receptor of RGF peptides (e.g. RGF1, GLV5/CLEL1/RGF2, GLV7/CLEL3/RGF3, GLV3/RGF4, GLV10/CLEL7/RGF5 and RGF10/CLELN), peptide hormones which maintain the postembryonic root stem cell niche by regulating the expression levels and patterns of the transcription factor PLETHORA (PLT, e.g. PLT1 and PLT2) (PubMed:27001831, PubMed:27229311, PubMed:27229312). Links RGF peptides signal with their downstream components (PubMed:27001831, PubMed:27229311).</text>
</comment>
<comment type="catalytic activity">
    <reaction evidence="8">
        <text>L-seryl-[protein] + ATP = O-phospho-L-seryl-[protein] + ADP + H(+)</text>
        <dbReference type="Rhea" id="RHEA:17989"/>
        <dbReference type="Rhea" id="RHEA-COMP:9863"/>
        <dbReference type="Rhea" id="RHEA-COMP:11604"/>
        <dbReference type="ChEBI" id="CHEBI:15378"/>
        <dbReference type="ChEBI" id="CHEBI:29999"/>
        <dbReference type="ChEBI" id="CHEBI:30616"/>
        <dbReference type="ChEBI" id="CHEBI:83421"/>
        <dbReference type="ChEBI" id="CHEBI:456216"/>
        <dbReference type="EC" id="2.7.11.1"/>
    </reaction>
</comment>
<comment type="catalytic activity">
    <reaction evidence="8">
        <text>L-threonyl-[protein] + ATP = O-phospho-L-threonyl-[protein] + ADP + H(+)</text>
        <dbReference type="Rhea" id="RHEA:46608"/>
        <dbReference type="Rhea" id="RHEA-COMP:11060"/>
        <dbReference type="Rhea" id="RHEA-COMP:11605"/>
        <dbReference type="ChEBI" id="CHEBI:15378"/>
        <dbReference type="ChEBI" id="CHEBI:30013"/>
        <dbReference type="ChEBI" id="CHEBI:30616"/>
        <dbReference type="ChEBI" id="CHEBI:61977"/>
        <dbReference type="ChEBI" id="CHEBI:456216"/>
        <dbReference type="EC" id="2.7.11.1"/>
    </reaction>
</comment>
<comment type="subunit">
    <text evidence="14 15 17">Binds to RGF peptides such as RGF1, GLV5/CLEL1/RGF2, GLV7/CLEL3/RGF3, GLV3/RGF4, GLV10/CLEL7/RGF5 and RGF10/CLELN; these interactions trigger the formation of heterodimers with SERK1 (PubMed:27001831, PubMed:27229311). Interacts with UBP13 (PubMed:29339500).</text>
</comment>
<comment type="interaction">
    <interactant intactId="EBI-20664449">
        <id>C0LGV1</id>
    </interactant>
    <interactant intactId="EBI-16914444">
        <id>Q9LJY0</id>
        <label>PRK4</label>
    </interactant>
    <organismsDiffer>false</organismsDiffer>
    <experiments>2</experiments>
</comment>
<comment type="subcellular location">
    <subcellularLocation>
        <location evidence="7">Membrane</location>
        <topology evidence="7">Single-pass type I membrane protein</topology>
    </subcellularLocation>
</comment>
<comment type="tissue specificity">
    <text evidence="12 13 14 15">Specific to root meristems, especially in lateral root meristems (LRM).</text>
</comment>
<comment type="developmental stage">
    <text evidence="14 15">Present in the whole roots with a predominant expression in the proximal meristem, including the elongation zone, and a gradual decreases toward the differentiation zone.</text>
</comment>
<comment type="PTM">
    <text evidence="5">Phosphorylated and ubiquitinated upon interaction with RGF1, thus leading to activation a subsequent degradation (By similarity). Stabilized by UBP12 and UBP13-mediated deubiquitination (By similarity).</text>
</comment>
<comment type="PTM">
    <text evidence="3">Autophosphorylated.</text>
</comment>
<comment type="disruption phenotype">
    <text evidence="14 15 16">Smaller root meristem size and fewer root meristematic cortex cells, associated with shorter roots and a slighty reduced sensitivity to RGF1 (PubMed:27229311). Quintuple mutants rgi1 rgi2 rgi3 rgi4 rgi5 display a consistent short primary root phenotype with a small size of meristem associated with a total insensitivity to RGF1 and undetectable levels of PLT1 and PLT2 (PubMed:27229312). The triple mutant missing RGI1, RGI2 and RGI3 is insensitive to externally applied RGF peptides (e.g. RGF1 and RGF2) and has short roots characterized by a strong decrease in meristematic cell number and declined levels of PLT1 and PLT2 at the root tip (PubMed:27001831).</text>
</comment>
<comment type="similarity">
    <text evidence="8">Belongs to the protein kinase superfamily. Ser/Thr protein kinase family.</text>
</comment>
<comment type="sequence caution" evidence="23">
    <conflict type="erroneous gene model prediction">
        <sequence resource="EMBL-CDS" id="BAB10317"/>
    </conflict>
</comment>
<keyword id="KW-0067">ATP-binding</keyword>
<keyword id="KW-1015">Disulfide bond</keyword>
<keyword id="KW-0325">Glycoprotein</keyword>
<keyword id="KW-0418">Kinase</keyword>
<keyword id="KW-0433">Leucine-rich repeat</keyword>
<keyword id="KW-0472">Membrane</keyword>
<keyword id="KW-0547">Nucleotide-binding</keyword>
<keyword id="KW-0597">Phosphoprotein</keyword>
<keyword id="KW-0675">Receptor</keyword>
<keyword id="KW-1185">Reference proteome</keyword>
<keyword id="KW-0677">Repeat</keyword>
<keyword id="KW-0723">Serine/threonine-protein kinase</keyword>
<keyword id="KW-0732">Signal</keyword>
<keyword id="KW-0808">Transferase</keyword>
<keyword id="KW-0812">Transmembrane</keyword>
<keyword id="KW-1133">Transmembrane helix</keyword>
<keyword id="KW-0832">Ubl conjugation</keyword>
<dbReference type="EC" id="2.7.11.1" evidence="8"/>
<dbReference type="EMBL" id="AJ550162">
    <property type="protein sequence ID" value="CAD79349.1"/>
    <property type="molecule type" value="mRNA"/>
</dbReference>
<dbReference type="EMBL" id="AB017061">
    <property type="protein sequence ID" value="BAB10317.1"/>
    <property type="status" value="ALT_SEQ"/>
    <property type="molecule type" value="Genomic_DNA"/>
</dbReference>
<dbReference type="EMBL" id="CP002688">
    <property type="protein sequence ID" value="AED95745.1"/>
    <property type="molecule type" value="Genomic_DNA"/>
</dbReference>
<dbReference type="EMBL" id="FJ708795">
    <property type="protein sequence ID" value="ACN59386.1"/>
    <property type="molecule type" value="mRNA"/>
</dbReference>
<dbReference type="RefSeq" id="NP_199705.2">
    <property type="nucleotide sequence ID" value="NM_124271.3"/>
</dbReference>
<dbReference type="SMR" id="C0LGV1"/>
<dbReference type="BioGRID" id="20198">
    <property type="interactions" value="8"/>
</dbReference>
<dbReference type="IntAct" id="C0LGV1">
    <property type="interactions" value="9"/>
</dbReference>
<dbReference type="STRING" id="3702.C0LGV1"/>
<dbReference type="GlyCosmos" id="C0LGV1">
    <property type="glycosylation" value="16 sites, No reported glycans"/>
</dbReference>
<dbReference type="GlyGen" id="C0LGV1">
    <property type="glycosylation" value="16 sites"/>
</dbReference>
<dbReference type="PaxDb" id="3702-AT5G48940.1"/>
<dbReference type="ProteomicsDB" id="225943"/>
<dbReference type="EnsemblPlants" id="AT5G48940.1">
    <property type="protein sequence ID" value="AT5G48940.1"/>
    <property type="gene ID" value="AT5G48940"/>
</dbReference>
<dbReference type="GeneID" id="834952"/>
<dbReference type="Gramene" id="AT5G48940.1">
    <property type="protein sequence ID" value="AT5G48940.1"/>
    <property type="gene ID" value="AT5G48940"/>
</dbReference>
<dbReference type="KEGG" id="ath:AT5G48940"/>
<dbReference type="Araport" id="AT5G48940"/>
<dbReference type="TAIR" id="AT5G48940">
    <property type="gene designation" value="RGFR2"/>
</dbReference>
<dbReference type="eggNOG" id="ENOG502QQEU">
    <property type="taxonomic scope" value="Eukaryota"/>
</dbReference>
<dbReference type="HOGENOM" id="CLU_000288_22_1_1"/>
<dbReference type="InParanoid" id="C0LGV1"/>
<dbReference type="OMA" id="NGHDSCF"/>
<dbReference type="OrthoDB" id="676979at2759"/>
<dbReference type="PhylomeDB" id="C0LGV1"/>
<dbReference type="PRO" id="PR:C0LGV1"/>
<dbReference type="Proteomes" id="UP000006548">
    <property type="component" value="Chromosome 5"/>
</dbReference>
<dbReference type="ExpressionAtlas" id="C0LGV1">
    <property type="expression patterns" value="baseline and differential"/>
</dbReference>
<dbReference type="GO" id="GO:0016020">
    <property type="term" value="C:membrane"/>
    <property type="evidence" value="ECO:0007669"/>
    <property type="project" value="UniProtKB-SubCell"/>
</dbReference>
<dbReference type="GO" id="GO:0005524">
    <property type="term" value="F:ATP binding"/>
    <property type="evidence" value="ECO:0007669"/>
    <property type="project" value="UniProtKB-KW"/>
</dbReference>
<dbReference type="GO" id="GO:0042277">
    <property type="term" value="F:peptide binding"/>
    <property type="evidence" value="ECO:0000353"/>
    <property type="project" value="UniProtKB"/>
</dbReference>
<dbReference type="GO" id="GO:0001653">
    <property type="term" value="F:peptide receptor activity"/>
    <property type="evidence" value="ECO:0000315"/>
    <property type="project" value="UniProtKB"/>
</dbReference>
<dbReference type="GO" id="GO:0106310">
    <property type="term" value="F:protein serine kinase activity"/>
    <property type="evidence" value="ECO:0007669"/>
    <property type="project" value="RHEA"/>
</dbReference>
<dbReference type="GO" id="GO:0004674">
    <property type="term" value="F:protein serine/threonine kinase activity"/>
    <property type="evidence" value="ECO:0007669"/>
    <property type="project" value="UniProtKB-KW"/>
</dbReference>
<dbReference type="GO" id="GO:0010074">
    <property type="term" value="P:maintenance of meristem identity"/>
    <property type="evidence" value="ECO:0000315"/>
    <property type="project" value="UniProtKB"/>
</dbReference>
<dbReference type="GO" id="GO:0010078">
    <property type="term" value="P:maintenance of root meristem identity"/>
    <property type="evidence" value="ECO:0000315"/>
    <property type="project" value="UniProtKB"/>
</dbReference>
<dbReference type="GO" id="GO:2000280">
    <property type="term" value="P:regulation of root development"/>
    <property type="evidence" value="ECO:0000315"/>
    <property type="project" value="UniProtKB"/>
</dbReference>
<dbReference type="GO" id="GO:0010082">
    <property type="term" value="P:regulation of root meristem growth"/>
    <property type="evidence" value="ECO:0000316"/>
    <property type="project" value="TAIR"/>
</dbReference>
<dbReference type="GO" id="GO:0010449">
    <property type="term" value="P:root meristem growth"/>
    <property type="evidence" value="ECO:0000316"/>
    <property type="project" value="TAIR"/>
</dbReference>
<dbReference type="FunFam" id="1.10.510.10:FF:000276">
    <property type="entry name" value="LRR receptor-like serine/threonine-protein kinase RCH1"/>
    <property type="match status" value="1"/>
</dbReference>
<dbReference type="FunFam" id="3.30.200.20:FF:000748">
    <property type="entry name" value="LRR receptor-like serine/threonine-protein kinase RCH1"/>
    <property type="match status" value="1"/>
</dbReference>
<dbReference type="FunFam" id="3.80.10.10:FF:000333">
    <property type="entry name" value="LRR receptor-like serine/threonine-protein kinase RCH1"/>
    <property type="match status" value="1"/>
</dbReference>
<dbReference type="FunFam" id="3.80.10.10:FF:002654">
    <property type="entry name" value="LRR receptor-like serine/threonine-protein kinase RCH1"/>
    <property type="match status" value="1"/>
</dbReference>
<dbReference type="FunFam" id="3.80.10.10:FF:000775">
    <property type="entry name" value="Predicted protein"/>
    <property type="match status" value="1"/>
</dbReference>
<dbReference type="FunFam" id="3.80.10.10:FF:000826">
    <property type="entry name" value="Receptor-like protein kinase 2"/>
    <property type="match status" value="1"/>
</dbReference>
<dbReference type="Gene3D" id="3.30.200.20">
    <property type="entry name" value="Phosphorylase Kinase, domain 1"/>
    <property type="match status" value="1"/>
</dbReference>
<dbReference type="Gene3D" id="3.80.10.10">
    <property type="entry name" value="Ribonuclease Inhibitor"/>
    <property type="match status" value="4"/>
</dbReference>
<dbReference type="Gene3D" id="1.10.510.10">
    <property type="entry name" value="Transferase(Phosphotransferase) domain 1"/>
    <property type="match status" value="1"/>
</dbReference>
<dbReference type="InterPro" id="IPR011009">
    <property type="entry name" value="Kinase-like_dom_sf"/>
</dbReference>
<dbReference type="InterPro" id="IPR001611">
    <property type="entry name" value="Leu-rich_rpt"/>
</dbReference>
<dbReference type="InterPro" id="IPR003591">
    <property type="entry name" value="Leu-rich_rpt_typical-subtyp"/>
</dbReference>
<dbReference type="InterPro" id="IPR032675">
    <property type="entry name" value="LRR_dom_sf"/>
</dbReference>
<dbReference type="InterPro" id="IPR013210">
    <property type="entry name" value="LRR_N_plant-typ"/>
</dbReference>
<dbReference type="InterPro" id="IPR055414">
    <property type="entry name" value="LRR_R13L4/SHOC2-like"/>
</dbReference>
<dbReference type="InterPro" id="IPR050647">
    <property type="entry name" value="Plant_LRR-RLKs"/>
</dbReference>
<dbReference type="InterPro" id="IPR000719">
    <property type="entry name" value="Prot_kinase_dom"/>
</dbReference>
<dbReference type="InterPro" id="IPR017441">
    <property type="entry name" value="Protein_kinase_ATP_BS"/>
</dbReference>
<dbReference type="InterPro" id="IPR001245">
    <property type="entry name" value="Ser-Thr/Tyr_kinase_cat_dom"/>
</dbReference>
<dbReference type="InterPro" id="IPR008271">
    <property type="entry name" value="Ser/Thr_kinase_AS"/>
</dbReference>
<dbReference type="PANTHER" id="PTHR48056">
    <property type="entry name" value="LRR RECEPTOR-LIKE SERINE/THREONINE-PROTEIN KINASE-RELATED"/>
    <property type="match status" value="1"/>
</dbReference>
<dbReference type="PANTHER" id="PTHR48056:SF5">
    <property type="entry name" value="RECEPTOR-LIKE PROTEIN KINASE 2"/>
    <property type="match status" value="1"/>
</dbReference>
<dbReference type="Pfam" id="PF00560">
    <property type="entry name" value="LRR_1"/>
    <property type="match status" value="3"/>
</dbReference>
<dbReference type="Pfam" id="PF23598">
    <property type="entry name" value="LRR_14"/>
    <property type="match status" value="1"/>
</dbReference>
<dbReference type="Pfam" id="PF13855">
    <property type="entry name" value="LRR_8"/>
    <property type="match status" value="1"/>
</dbReference>
<dbReference type="Pfam" id="PF08263">
    <property type="entry name" value="LRRNT_2"/>
    <property type="match status" value="1"/>
</dbReference>
<dbReference type="Pfam" id="PF07714">
    <property type="entry name" value="PK_Tyr_Ser-Thr"/>
    <property type="match status" value="1"/>
</dbReference>
<dbReference type="PRINTS" id="PR00019">
    <property type="entry name" value="LEURICHRPT"/>
</dbReference>
<dbReference type="SMART" id="SM00365">
    <property type="entry name" value="LRR_SD22"/>
    <property type="match status" value="5"/>
</dbReference>
<dbReference type="SMART" id="SM00369">
    <property type="entry name" value="LRR_TYP"/>
    <property type="match status" value="7"/>
</dbReference>
<dbReference type="SMART" id="SM00220">
    <property type="entry name" value="S_TKc"/>
    <property type="match status" value="1"/>
</dbReference>
<dbReference type="SUPFAM" id="SSF56112">
    <property type="entry name" value="Protein kinase-like (PK-like)"/>
    <property type="match status" value="1"/>
</dbReference>
<dbReference type="SUPFAM" id="SSF52047">
    <property type="entry name" value="RNI-like"/>
    <property type="match status" value="2"/>
</dbReference>
<dbReference type="PROSITE" id="PS51450">
    <property type="entry name" value="LRR"/>
    <property type="match status" value="13"/>
</dbReference>
<dbReference type="PROSITE" id="PS00107">
    <property type="entry name" value="PROTEIN_KINASE_ATP"/>
    <property type="match status" value="1"/>
</dbReference>
<dbReference type="PROSITE" id="PS50011">
    <property type="entry name" value="PROTEIN_KINASE_DOM"/>
    <property type="match status" value="1"/>
</dbReference>
<dbReference type="PROSITE" id="PS00108">
    <property type="entry name" value="PROTEIN_KINASE_ST"/>
    <property type="match status" value="1"/>
</dbReference>
<reference key="1">
    <citation type="journal article" date="2003" name="Curr. Biol.">
        <title>Root-specific CLE19 overexpression and the sol1/2 suppressors implicate a CLV-like pathway in the control of Arabidopsis root meristem maintenance.</title>
        <authorList>
            <person name="Casamitjana-Martinez E."/>
            <person name="Hofhuis H.F."/>
            <person name="Xu J."/>
            <person name="Liu C.-M."/>
            <person name="Heidstra R."/>
            <person name="Scheres B."/>
        </authorList>
    </citation>
    <scope>NUCLEOTIDE SEQUENCE [MRNA]</scope>
    <source>
        <strain>cv. Columbia</strain>
    </source>
</reference>
<reference key="2">
    <citation type="journal article" date="1999" name="DNA Res.">
        <title>Structural analysis of Arabidopsis thaliana chromosome 5. IX. Sequence features of the regions of 1,011,550 bp covered by seventeen P1 and TAC clones.</title>
        <authorList>
            <person name="Kaneko T."/>
            <person name="Katoh T."/>
            <person name="Sato S."/>
            <person name="Nakamura Y."/>
            <person name="Asamizu E."/>
            <person name="Kotani H."/>
            <person name="Miyajima N."/>
            <person name="Tabata S."/>
        </authorList>
    </citation>
    <scope>NUCLEOTIDE SEQUENCE [LARGE SCALE GENOMIC DNA]</scope>
    <source>
        <strain>cv. Columbia</strain>
    </source>
</reference>
<reference key="3">
    <citation type="journal article" date="2017" name="Plant J.">
        <title>Araport11: a complete reannotation of the Arabidopsis thaliana reference genome.</title>
        <authorList>
            <person name="Cheng C.Y."/>
            <person name="Krishnakumar V."/>
            <person name="Chan A.P."/>
            <person name="Thibaud-Nissen F."/>
            <person name="Schobel S."/>
            <person name="Town C.D."/>
        </authorList>
    </citation>
    <scope>GENOME REANNOTATION</scope>
    <source>
        <strain>cv. Columbia</strain>
    </source>
</reference>
<reference key="4">
    <citation type="journal article" date="2010" name="BMC Genomics">
        <title>Genome-wide cloning and sequence analysis of leucine-rich repeat receptor-like protein kinase genes in Arabidopsis thaliana.</title>
        <authorList>
            <person name="Gou X."/>
            <person name="He K."/>
            <person name="Yang H."/>
            <person name="Yuan T."/>
            <person name="Lin H."/>
            <person name="Clouse S.D."/>
            <person name="Li J."/>
        </authorList>
    </citation>
    <scope>NUCLEOTIDE SEQUENCE [LARGE SCALE MRNA]</scope>
    <source>
        <strain>cv. Columbia</strain>
    </source>
</reference>
<reference key="5">
    <citation type="journal article" date="2007" name="Curr. Biol.">
        <title>Cytokinins determine Arabidopsis root-meristem size by controlling cell differentiation.</title>
        <authorList>
            <person name="Dello Ioio R."/>
            <person name="Linhares F.S."/>
            <person name="Scacchi E."/>
            <person name="Casamitjana-Martinez E."/>
            <person name="Heidstra R."/>
            <person name="Costantino P."/>
            <person name="Sabatini S."/>
        </authorList>
    </citation>
    <scope>TISSUE SPECIFICITY</scope>
</reference>
<reference key="6">
    <citation type="journal article" date="2009" name="Plant J.">
        <title>Pluripotency of Arabidopsis xylem pericycle underlies shoot regeneration from root and hypocotyl explants grown in vitro.</title>
        <authorList>
            <person name="Atta R."/>
            <person name="Laurens L."/>
            <person name="Boucheron-Dubuisson E."/>
            <person name="Guivarc'h A."/>
            <person name="Carnero E."/>
            <person name="Giraudat-Pautot V."/>
            <person name="Rech P."/>
            <person name="Chriqui D."/>
        </authorList>
    </citation>
    <scope>TISSUE SPECIFICITY</scope>
</reference>
<reference key="7">
    <citation type="journal article" date="2016" name="Cell Res.">
        <title>Signature motif-guided identification of receptors for peptide hormones essential for root meristem growth.</title>
        <authorList>
            <person name="Song W."/>
            <person name="Liu L."/>
            <person name="Wang J."/>
            <person name="Wu Z."/>
            <person name="Zhang H."/>
            <person name="Tang J."/>
            <person name="Lin G."/>
            <person name="Wang Y."/>
            <person name="Wen X."/>
            <person name="Li W."/>
            <person name="Han Z."/>
            <person name="Guo H."/>
            <person name="Chai J."/>
        </authorList>
    </citation>
    <scope>FUNCTION</scope>
    <scope>DISRUPTION PHENOTYPE</scope>
    <scope>TISSUE SPECIFICITY</scope>
    <scope>DEVELOPMENTAL STAGE</scope>
    <scope>INTERACTION WITH RGF1</scope>
    <scope>GENE FAMILY</scope>
    <scope>NOMENCLATURE</scope>
    <source>
        <strain>cv. Columbia</strain>
    </source>
</reference>
<reference key="8">
    <citation type="journal article" date="2016" name="Cell Res.">
        <title>RGF1 INSENSITIVE 1 to 5, a group of LRR receptor-like kinases, are essential for the perception of root meristem growth factor 1 in Arabidopsis thaliana.</title>
        <authorList>
            <person name="Ou Y."/>
            <person name="Lu X."/>
            <person name="Zi Q."/>
            <person name="Xun Q."/>
            <person name="Zhang J."/>
            <person name="Wu Y."/>
            <person name="Shi H."/>
            <person name="Wei Z."/>
            <person name="Zhao B."/>
            <person name="Zhang X."/>
            <person name="He K."/>
            <person name="Gou X."/>
            <person name="Li C."/>
            <person name="Li J."/>
        </authorList>
    </citation>
    <scope>FUNCTION</scope>
    <scope>DISRUPTION PHENOTYPE</scope>
    <source>
        <strain>cv. Columbia</strain>
    </source>
</reference>
<reference key="9">
    <citation type="journal article" date="2016" name="Proc. Natl. Acad. Sci. U.S.A.">
        <title>Identification of three LRR-RKs involved in perception of root meristem growth factor in Arabidopsis.</title>
        <authorList>
            <person name="Shinohara H."/>
            <person name="Mori A."/>
            <person name="Yasue N."/>
            <person name="Sumida K."/>
            <person name="Matsubayashi Y."/>
        </authorList>
    </citation>
    <scope>FUNCTION</scope>
    <scope>DISRUPTION PHENOTYPE</scope>
    <scope>INTERACTION WITH RGF1; GLV5/CLEL1/RGF2; GLV7/CLEL3/RGF3; GLV3/RGF4; GLV10/CLEL7/RGF5 AND RGF10/CLELN</scope>
    <scope>TISSUE SPECIFICITY</scope>
    <scope>DEVELOPMENTAL STAGE</scope>
    <source>
        <strain>cv. Columbia</strain>
    </source>
</reference>
<reference key="10">
    <citation type="journal article" date="2018" name="Proc. Natl. Acad. Sci. U.S.A.">
        <title>Regulation of the stability of RGF1 receptor by the ubiquitin-specific proteases UBP12/UBP13 is critical for root meristem maintenance.</title>
        <authorList>
            <person name="An Z."/>
            <person name="Liu Y."/>
            <person name="Ou Y."/>
            <person name="Li J."/>
            <person name="Zhang B."/>
            <person name="Sun D."/>
            <person name="Sun Y."/>
            <person name="Tang W."/>
        </authorList>
    </citation>
    <scope>INTERACTION WITH UBP13</scope>
    <source>
        <strain>cv. Columbia</strain>
    </source>
</reference>
<name>RGI2_ARATH</name>
<protein>
    <recommendedName>
        <fullName evidence="21">LRR receptor-like serine/threonine-protein kinase RGI2</fullName>
        <ecNumber evidence="8">2.7.11.1</ecNumber>
    </recommendedName>
    <alternativeName>
        <fullName evidence="20">Protein RECEPTOR OF RGF1 3</fullName>
    </alternativeName>
    <alternativeName>
        <fullName evidence="21">Protein RGF1 INSENSITIVE 2</fullName>
    </alternativeName>
    <alternativeName>
        <fullName evidence="18">Protein ROOT CLAVATA-HOMOLOG1 1</fullName>
    </alternativeName>
</protein>
<sequence length="1135" mass="123612">MSLQMPIPRKKALTVSHFSITLSLFLAFFISSTSASTNEVSALISWLHSSNSPPPSVFSGWNPSDSDPCQWPYITCSSSDNKLVTEINVVSVQLALPFPPNISSFTSLQKLVISNTNLTGAISSEIGDCSELIVIDLSSNSLVGEIPSSLGKLKNLQELCLNSNGLTGKIPPELGDCVSLKNLEIFDNYLSENLPLELGKISTLESIRAGGNSELSGKIPEEIGNCRNLKVLGLAATKISGSLPVSLGQLSKLQSLSVYSTMLSGEIPKELGNCSELINLFLYDNDLSGTLPKELGKLQNLEKMLLWQNNLHGPIPEEIGFMKSLNAIDLSMNYFSGTIPKSFGNLSNLQELMLSSNNITGSIPSILSNCTKLVQFQIDANQISGLIPPEIGLLKELNIFLGWQNKLEGNIPDELAGCQNLQALDLSQNYLTGSLPAGLFQLRNLTKLLLISNAISGVIPLEIGNCTSLVRLRLVNNRITGEIPKGIGFLQNLSFLDLSENNLSGPVPLEISNCRQLQMLNLSNNTLQGYLPLSLSSLTKLQVLDVSSNDLTGKIPDSLGHLISLNRLILSKNSFNGEIPSSLGHCTNLQLLDLSSNNISGTIPEELFDIQDLDIALNLSWNSLDGFIPERISALNRLSVLDISHNMLSGDLSALSGLENLVSLNISHNRFSGYLPDSKVFRQLIGAEMEGNNGLCSKGFRSCFVSNSSQLTTQRGVHSHRLRIAIGLLISVTAVLAVLGVLAVIRAKQMIRDDNDSETGENLWTWQFTPFQKLNFTVEHVLKCLVEGNVIGKGCSGIVYKAEMPNREVIAVKKLWPVTVPNLNEKTKSSGVRDSFSAEVKTLGSIRHKNIVRFLGCCWNKNTRLLMYDYMSNGSLGSLLHERSGVCSLGWEVRYKIILGAAQGLAYLHHDCVPPIVHRDIKANNILIGPDFEPYIGDFGLAKLVDDGDFARSSNTIAGSYGYIAPEYGYSMKITEKSDVYSYGVVVLEVLTGKQPIDPTIPDGLHIVDWVKKIRDIQVIDQGLQARPESEVEEMMQTLGVALLCINPIPEDRPTMKDVAAMLSEICQEREESMKVDGCSGSCNNGRERGKDDSTSSVMQQTAKYLRSSSTSFSASSLLYSSSSSATSNVRPNLK</sequence>
<organism>
    <name type="scientific">Arabidopsis thaliana</name>
    <name type="common">Mouse-ear cress</name>
    <dbReference type="NCBI Taxonomy" id="3702"/>
    <lineage>
        <taxon>Eukaryota</taxon>
        <taxon>Viridiplantae</taxon>
        <taxon>Streptophyta</taxon>
        <taxon>Embryophyta</taxon>
        <taxon>Tracheophyta</taxon>
        <taxon>Spermatophyta</taxon>
        <taxon>Magnoliopsida</taxon>
        <taxon>eudicotyledons</taxon>
        <taxon>Gunneridae</taxon>
        <taxon>Pentapetalae</taxon>
        <taxon>rosids</taxon>
        <taxon>malvids</taxon>
        <taxon>Brassicales</taxon>
        <taxon>Brassicaceae</taxon>
        <taxon>Camelineae</taxon>
        <taxon>Arabidopsis</taxon>
    </lineage>
</organism>
<accession>C0LGV1</accession>
<accession>Q84RP6</accession>
<accession>Q9FI77</accession>